<comment type="function">
    <text>Cadherins are calcium-dependent cell adhesion proteins. They preferentially interact with themselves in a homophilic manner in connecting cells; cadherins may thus contribute to the sorting of heterogeneous cell types.</text>
</comment>
<comment type="subcellular location">
    <subcellularLocation>
        <location evidence="6">Cell membrane</location>
        <topology evidence="6">Single-pass type I membrane protein</topology>
    </subcellularLocation>
</comment>
<comment type="developmental stage">
    <text evidence="5">Not detected in fetal, newborn or 7-day-old testis. Present in 21-day-old and adult testes. Levels are 10-fold higher in adult testis than in testis of 21-day-old animals.</text>
</comment>
<comment type="domain">
    <text evidence="1">Three calcium ions are usually bound at the interface of each cadherin domain and rigidify the connections, imparting a strong curvature to the full-length ectodomain.</text>
</comment>
<keyword id="KW-0106">Calcium</keyword>
<keyword id="KW-0130">Cell adhesion</keyword>
<keyword id="KW-1003">Cell membrane</keyword>
<keyword id="KW-0165">Cleavage on pair of basic residues</keyword>
<keyword id="KW-0325">Glycoprotein</keyword>
<keyword id="KW-0472">Membrane</keyword>
<keyword id="KW-0479">Metal-binding</keyword>
<keyword id="KW-0597">Phosphoprotein</keyword>
<keyword id="KW-1185">Reference proteome</keyword>
<keyword id="KW-0677">Repeat</keyword>
<keyword id="KW-0732">Signal</keyword>
<keyword id="KW-0812">Transmembrane</keyword>
<keyword id="KW-1133">Transmembrane helix</keyword>
<organism>
    <name type="scientific">Mus musculus</name>
    <name type="common">Mouse</name>
    <dbReference type="NCBI Taxonomy" id="10090"/>
    <lineage>
        <taxon>Eukaryota</taxon>
        <taxon>Metazoa</taxon>
        <taxon>Chordata</taxon>
        <taxon>Craniata</taxon>
        <taxon>Vertebrata</taxon>
        <taxon>Euteleostomi</taxon>
        <taxon>Mammalia</taxon>
        <taxon>Eutheria</taxon>
        <taxon>Euarchontoglires</taxon>
        <taxon>Glires</taxon>
        <taxon>Rodentia</taxon>
        <taxon>Myomorpha</taxon>
        <taxon>Muroidea</taxon>
        <taxon>Muridae</taxon>
        <taxon>Murinae</taxon>
        <taxon>Mus</taxon>
        <taxon>Mus</taxon>
    </lineage>
</organism>
<dbReference type="EMBL" id="AC116724">
    <property type="status" value="NOT_ANNOTATED_CDS"/>
    <property type="molecule type" value="Genomic_DNA"/>
</dbReference>
<dbReference type="EMBL" id="U69136">
    <property type="protein sequence ID" value="AAB87707.1"/>
    <property type="molecule type" value="mRNA"/>
</dbReference>
<dbReference type="SMR" id="P70407"/>
<dbReference type="FunCoup" id="P70407">
    <property type="interactions" value="130"/>
</dbReference>
<dbReference type="STRING" id="10090.ENSMUSP00000154022"/>
<dbReference type="GlyConnect" id="2173">
    <property type="glycosylation" value="2 N-Linked glycans (2 sites)"/>
</dbReference>
<dbReference type="GlyCosmos" id="P70407">
    <property type="glycosylation" value="5 sites, 2 glycans"/>
</dbReference>
<dbReference type="GlyGen" id="P70407">
    <property type="glycosylation" value="6 sites, 6 N-linked glycans (5 sites)"/>
</dbReference>
<dbReference type="iPTMnet" id="P70407"/>
<dbReference type="PhosphoSitePlus" id="P70407"/>
<dbReference type="PaxDb" id="10090-ENSMUSP00000026432"/>
<dbReference type="ProteomicsDB" id="281745"/>
<dbReference type="AGR" id="MGI:107433"/>
<dbReference type="MGI" id="MGI:107433">
    <property type="gene designation" value="Cdh9"/>
</dbReference>
<dbReference type="eggNOG" id="KOG3594">
    <property type="taxonomic scope" value="Eukaryota"/>
</dbReference>
<dbReference type="InParanoid" id="P70407"/>
<dbReference type="PhylomeDB" id="P70407"/>
<dbReference type="Reactome" id="R-MMU-418990">
    <property type="pathway name" value="Adherens junctions interactions"/>
</dbReference>
<dbReference type="ChiTaRS" id="Cdh9">
    <property type="organism name" value="mouse"/>
</dbReference>
<dbReference type="PRO" id="PR:P70407"/>
<dbReference type="Proteomes" id="UP000000589">
    <property type="component" value="Unplaced"/>
</dbReference>
<dbReference type="RNAct" id="P70407">
    <property type="molecule type" value="protein"/>
</dbReference>
<dbReference type="GO" id="GO:0030424">
    <property type="term" value="C:axon"/>
    <property type="evidence" value="ECO:0000314"/>
    <property type="project" value="SynGO-UCL"/>
</dbReference>
<dbReference type="GO" id="GO:0030425">
    <property type="term" value="C:dendrite"/>
    <property type="evidence" value="ECO:0000314"/>
    <property type="project" value="SynGO-UCL"/>
</dbReference>
<dbReference type="GO" id="GO:0098978">
    <property type="term" value="C:glutamatergic synapse"/>
    <property type="evidence" value="ECO:0000314"/>
    <property type="project" value="SynGO"/>
</dbReference>
<dbReference type="GO" id="GO:0098686">
    <property type="term" value="C:hippocampal mossy fiber to CA3 synapse"/>
    <property type="evidence" value="ECO:0000314"/>
    <property type="project" value="SynGO-UCL"/>
</dbReference>
<dbReference type="GO" id="GO:0045211">
    <property type="term" value="C:postsynaptic membrane"/>
    <property type="evidence" value="ECO:0000314"/>
    <property type="project" value="SynGO"/>
</dbReference>
<dbReference type="GO" id="GO:0042734">
    <property type="term" value="C:presynaptic membrane"/>
    <property type="evidence" value="ECO:0000314"/>
    <property type="project" value="SynGO"/>
</dbReference>
<dbReference type="GO" id="GO:0045202">
    <property type="term" value="C:synapse"/>
    <property type="evidence" value="ECO:0000314"/>
    <property type="project" value="SynGO"/>
</dbReference>
<dbReference type="GO" id="GO:0098641">
    <property type="term" value="F:cadherin binding involved in cell-cell adhesion"/>
    <property type="evidence" value="ECO:0000353"/>
    <property type="project" value="SynGO-UCL"/>
</dbReference>
<dbReference type="GO" id="GO:0005509">
    <property type="term" value="F:calcium ion binding"/>
    <property type="evidence" value="ECO:0007669"/>
    <property type="project" value="InterPro"/>
</dbReference>
<dbReference type="GO" id="GO:0042802">
    <property type="term" value="F:identical protein binding"/>
    <property type="evidence" value="ECO:0000353"/>
    <property type="project" value="SynGO-UCL"/>
</dbReference>
<dbReference type="GO" id="GO:0007156">
    <property type="term" value="P:homophilic cell adhesion via plasma membrane adhesion molecules"/>
    <property type="evidence" value="ECO:0007669"/>
    <property type="project" value="InterPro"/>
</dbReference>
<dbReference type="GO" id="GO:0007416">
    <property type="term" value="P:synapse assembly"/>
    <property type="evidence" value="ECO:0000314"/>
    <property type="project" value="SynGO-UCL"/>
</dbReference>
<dbReference type="GO" id="GO:0099560">
    <property type="term" value="P:synaptic membrane adhesion"/>
    <property type="evidence" value="ECO:0000314"/>
    <property type="project" value="SynGO"/>
</dbReference>
<dbReference type="CDD" id="cd11304">
    <property type="entry name" value="Cadherin_repeat"/>
    <property type="match status" value="5"/>
</dbReference>
<dbReference type="FunFam" id="2.60.40.60:FF:000297">
    <property type="entry name" value="Cadherin 12"/>
    <property type="match status" value="1"/>
</dbReference>
<dbReference type="FunFam" id="2.60.40.60:FF:000009">
    <property type="entry name" value="Cadherin 24"/>
    <property type="match status" value="1"/>
</dbReference>
<dbReference type="FunFam" id="2.60.40.60:FF:000012">
    <property type="entry name" value="Cadherin 24"/>
    <property type="match status" value="1"/>
</dbReference>
<dbReference type="FunFam" id="2.60.40.60:FF:000017">
    <property type="entry name" value="Cadherin 24"/>
    <property type="match status" value="1"/>
</dbReference>
<dbReference type="FunFam" id="2.60.40.60:FF:000014">
    <property type="entry name" value="Cadherin 8"/>
    <property type="match status" value="1"/>
</dbReference>
<dbReference type="FunFam" id="4.10.900.10:FF:000006">
    <property type="entry name" value="Cadherin-9 preproprotein"/>
    <property type="match status" value="1"/>
</dbReference>
<dbReference type="Gene3D" id="2.60.40.60">
    <property type="entry name" value="Cadherins"/>
    <property type="match status" value="5"/>
</dbReference>
<dbReference type="Gene3D" id="4.10.900.10">
    <property type="entry name" value="TCF3-CBD (Catenin binding domain)"/>
    <property type="match status" value="1"/>
</dbReference>
<dbReference type="InterPro" id="IPR039808">
    <property type="entry name" value="Cadherin"/>
</dbReference>
<dbReference type="InterPro" id="IPR002126">
    <property type="entry name" value="Cadherin-like_dom"/>
</dbReference>
<dbReference type="InterPro" id="IPR015919">
    <property type="entry name" value="Cadherin-like_sf"/>
</dbReference>
<dbReference type="InterPro" id="IPR020894">
    <property type="entry name" value="Cadherin_CS"/>
</dbReference>
<dbReference type="InterPro" id="IPR000233">
    <property type="entry name" value="Cadherin_Y-type_LIR"/>
</dbReference>
<dbReference type="InterPro" id="IPR027397">
    <property type="entry name" value="Catenin-bd_sf"/>
</dbReference>
<dbReference type="PANTHER" id="PTHR24027">
    <property type="entry name" value="CADHERIN-23"/>
    <property type="match status" value="1"/>
</dbReference>
<dbReference type="PANTHER" id="PTHR24027:SF99">
    <property type="entry name" value="CADHERIN-9"/>
    <property type="match status" value="1"/>
</dbReference>
<dbReference type="Pfam" id="PF01049">
    <property type="entry name" value="CADH_Y-type_LIR"/>
    <property type="match status" value="1"/>
</dbReference>
<dbReference type="Pfam" id="PF00028">
    <property type="entry name" value="Cadherin"/>
    <property type="match status" value="5"/>
</dbReference>
<dbReference type="PRINTS" id="PR00205">
    <property type="entry name" value="CADHERIN"/>
</dbReference>
<dbReference type="SMART" id="SM00112">
    <property type="entry name" value="CA"/>
    <property type="match status" value="5"/>
</dbReference>
<dbReference type="SUPFAM" id="SSF49313">
    <property type="entry name" value="Cadherin-like"/>
    <property type="match status" value="5"/>
</dbReference>
<dbReference type="PROSITE" id="PS00232">
    <property type="entry name" value="CADHERIN_1"/>
    <property type="match status" value="2"/>
</dbReference>
<dbReference type="PROSITE" id="PS50268">
    <property type="entry name" value="CADHERIN_2"/>
    <property type="match status" value="5"/>
</dbReference>
<proteinExistence type="evidence at transcript level"/>
<sequence length="786" mass="88301">MRTYSCLQLVIWTCIFHMVDNSTLQGKDSSHFLRRIVNLKKDEGKMLHRAKRGWMWNQFFLLEEYTGTDTQYVGKLHTDQDKGDGNLKYILTGDGAGNLFVIDENTGDIHAAKRLDREEKSLYILRAKAIDRKTGRQVEPESEFIIKIHDINDNEPKFTKDLYTASVPEMSGVGTSVIQVTATDADDANYGNSAKVVYSILQGQPYFSVDPESGIIKTALPDMSRENKEQYQVVIQAKDMGGQMGGLSGTTTVNITLTDVNNNPPRFPQSTYQFNSLESAPLGTHLGRIKANDPDMGENAELEYSIAEGEGSDMFDVITDKDTQEGIITVKQNLDFEKKMLYTLRVDASNTHPDPRFLHLGPFKDSAMVKISVEDVDEPPVFSKLSYLMEVDEDVKEGSIIGQVTAYDPDAMNNIIKYSVDRHTDMDRVFSIHSENGSIFTLKPLDRESSPWHNITITATEINNPKQSSQIPVFIRILDINDHAPEFATYYETFVCENAKSGQLIQTISVMDKDDPPRGHKFFFEPVPEFPLNPNFTIVDNKDNTAGIVTRKDGYSRNKMNTYLLPVLIFDNDYPIQSSTGTLTIRVCACDNLGNMQSCNAEALMLAAGLSTGALIAILLCVVILLTLIVLFAALKRQRKKEPLIISKDDVRDNIVTYNDEGGGEEDTQAFDIGTLRNPEAREDSKLRRDVMPETIFQIRRTVPLWENIDVQDFIHRRLKENDSDPSAPPYDSLATYAYEGNDSVANSLSSLESLTADCNQDYDYLSDWGPRFKKLAEMYGGNDSD</sequence>
<reference key="1">
    <citation type="journal article" date="2009" name="PLoS Biol.">
        <title>Lineage-specific biology revealed by a finished genome assembly of the mouse.</title>
        <authorList>
            <person name="Church D.M."/>
            <person name="Goodstadt L."/>
            <person name="Hillier L.W."/>
            <person name="Zody M.C."/>
            <person name="Goldstein S."/>
            <person name="She X."/>
            <person name="Bult C.J."/>
            <person name="Agarwala R."/>
            <person name="Cherry J.L."/>
            <person name="DiCuccio M."/>
            <person name="Hlavina W."/>
            <person name="Kapustin Y."/>
            <person name="Meric P."/>
            <person name="Maglott D."/>
            <person name="Birtle Z."/>
            <person name="Marques A.C."/>
            <person name="Graves T."/>
            <person name="Zhou S."/>
            <person name="Teague B."/>
            <person name="Potamousis K."/>
            <person name="Churas C."/>
            <person name="Place M."/>
            <person name="Herschleb J."/>
            <person name="Runnheim R."/>
            <person name="Forrest D."/>
            <person name="Amos-Landgraf J."/>
            <person name="Schwartz D.C."/>
            <person name="Cheng Z."/>
            <person name="Lindblad-Toh K."/>
            <person name="Eichler E.E."/>
            <person name="Ponting C.P."/>
        </authorList>
    </citation>
    <scope>NUCLEOTIDE SEQUENCE [LARGE SCALE GENOMIC DNA]</scope>
    <source>
        <strain>C57BL/6J</strain>
    </source>
</reference>
<reference key="2">
    <citation type="journal article" date="1996" name="Biol. Reprod.">
        <title>A comprehensive survey of the cadherins expressed in the testes of fetal, immature, and adult mice utilizing the polymerase chain reaction.</title>
        <authorList>
            <person name="Munro S.B."/>
            <person name="Blaschuk O.W."/>
        </authorList>
    </citation>
    <scope>NUCLEOTIDE SEQUENCE [MRNA] OF 679-786</scope>
    <scope>DEVELOPMENTAL STAGE</scope>
    <source>
        <strain>C57BL/6J</strain>
        <tissue>Testis</tissue>
    </source>
</reference>
<reference key="3">
    <citation type="journal article" date="1996" name="Cell. Immunol.">
        <title>Characterization of cadherins expressed by murine thymocytes.</title>
        <authorList>
            <person name="Munro S.B."/>
            <person name="Duclos A.J."/>
            <person name="Jackson A.R."/>
            <person name="Baines M.G."/>
            <person name="Blaschuk O.W."/>
        </authorList>
    </citation>
    <scope>NUCLEOTIDE SEQUENCE [MRNA] OF 733-772</scope>
    <source>
        <strain>CBA/J</strain>
        <tissue>Thymocyte</tissue>
    </source>
</reference>
<protein>
    <recommendedName>
        <fullName>Cadherin-9</fullName>
    </recommendedName>
    <alternativeName>
        <fullName>T1-cadherin</fullName>
    </alternativeName>
</protein>
<name>CADH9_MOUSE</name>
<evidence type="ECO:0000250" key="1"/>
<evidence type="ECO:0000250" key="2">
    <source>
        <dbReference type="UniProtKB" id="P97326"/>
    </source>
</evidence>
<evidence type="ECO:0000255" key="3"/>
<evidence type="ECO:0000255" key="4">
    <source>
        <dbReference type="PROSITE-ProRule" id="PRU00043"/>
    </source>
</evidence>
<evidence type="ECO:0000269" key="5">
    <source>
    </source>
</evidence>
<evidence type="ECO:0000305" key="6"/>
<gene>
    <name type="primary">Cdh9</name>
</gene>
<feature type="signal peptide" evidence="3">
    <location>
        <begin position="1"/>
        <end position="21"/>
    </location>
</feature>
<feature type="propeptide" id="PRO_0000269661" evidence="3">
    <location>
        <begin position="22"/>
        <end position="52"/>
    </location>
</feature>
<feature type="chain" id="PRO_0000126645" description="Cadherin-9">
    <location>
        <begin position="53"/>
        <end position="786"/>
    </location>
</feature>
<feature type="topological domain" description="Extracellular" evidence="3">
    <location>
        <begin position="22"/>
        <end position="614"/>
    </location>
</feature>
<feature type="transmembrane region" description="Helical" evidence="3">
    <location>
        <begin position="615"/>
        <end position="635"/>
    </location>
</feature>
<feature type="topological domain" description="Cytoplasmic" evidence="3">
    <location>
        <begin position="636"/>
        <end position="786"/>
    </location>
</feature>
<feature type="domain" description="Cadherin 1" evidence="4">
    <location>
        <begin position="54"/>
        <end position="158"/>
    </location>
</feature>
<feature type="domain" description="Cadherin 2" evidence="4">
    <location>
        <begin position="159"/>
        <end position="267"/>
    </location>
</feature>
<feature type="domain" description="Cadherin 3" evidence="4">
    <location>
        <begin position="268"/>
        <end position="382"/>
    </location>
</feature>
<feature type="domain" description="Cadherin 4" evidence="4">
    <location>
        <begin position="383"/>
        <end position="487"/>
    </location>
</feature>
<feature type="domain" description="Cadherin 5" evidence="4">
    <location>
        <begin position="487"/>
        <end position="604"/>
    </location>
</feature>
<feature type="modified residue" description="Phosphoserine" evidence="2">
    <location>
        <position position="785"/>
    </location>
</feature>
<feature type="glycosylation site" description="N-linked (GlcNAc...) asparagine" evidence="3">
    <location>
        <position position="21"/>
    </location>
</feature>
<feature type="glycosylation site" description="N-linked (GlcNAc...) asparagine" evidence="3">
    <location>
        <position position="254"/>
    </location>
</feature>
<feature type="glycosylation site" description="N-linked (GlcNAc...) asparagine" evidence="3">
    <location>
        <position position="454"/>
    </location>
</feature>
<feature type="glycosylation site" description="N-linked (GlcNAc...) asparagine" evidence="3">
    <location>
        <position position="535"/>
    </location>
</feature>
<feature type="sequence conflict" description="In Ref. 2; AAB87707." evidence="6" ref="2">
    <original>A</original>
    <variation>AK</variation>
    <location>
        <position position="681"/>
    </location>
</feature>
<feature type="sequence conflict" description="In Ref. 2; AAB87707." evidence="6" ref="2">
    <original>M</original>
    <variation>S</variation>
    <location>
        <position position="692"/>
    </location>
</feature>
<feature type="sequence conflict" description="In Ref. 2; AAB87707." evidence="6" ref="2">
    <original>DPS</original>
    <variation>T</variation>
    <location>
        <begin position="725"/>
        <end position="727"/>
    </location>
</feature>
<feature type="sequence conflict" description="In Ref. 2; AAB87707." evidence="6" ref="2">
    <original>D</original>
    <variation>DLN</variation>
    <location>
        <position position="786"/>
    </location>
</feature>
<accession>P70407</accession>